<proteinExistence type="evidence at protein level"/>
<sequence length="24" mass="2823">MKKARRSPSRRKGARLWYVGGSQF</sequence>
<organism>
    <name type="scientific">Escherichia phage alpha3</name>
    <name type="common">Bacteriophage alpha-3</name>
    <dbReference type="NCBI Taxonomy" id="10849"/>
    <lineage>
        <taxon>Viruses</taxon>
        <taxon>Monodnaviria</taxon>
        <taxon>Sangervirae</taxon>
        <taxon>Phixviricota</taxon>
        <taxon>Malgrandaviricetes</taxon>
        <taxon>Petitvirales</taxon>
        <taxon>Microviridae</taxon>
        <taxon>Bullavirinae</taxon>
        <taxon>Alphatrevirus</taxon>
        <taxon>Alphatrevirus alpha3</taxon>
    </lineage>
</organism>
<protein>
    <recommendedName>
        <fullName>DNA-binding protein J</fullName>
    </recommendedName>
    <alternativeName>
        <fullName>J protein</fullName>
    </alternativeName>
    <alternativeName>
        <fullName>Small core protein</fullName>
    </alternativeName>
</protein>
<keyword id="KW-0002">3D-structure</keyword>
<keyword id="KW-0167">Capsid protein</keyword>
<keyword id="KW-0238">DNA-binding</keyword>
<keyword id="KW-1035">Host cytoplasm</keyword>
<keyword id="KW-1185">Reference proteome</keyword>
<keyword id="KW-0231">Viral genome packaging</keyword>
<keyword id="KW-1188">Viral release from host cell</keyword>
<keyword id="KW-0946">Virion</keyword>
<name>J_BPAL3</name>
<accession>P69548</accession>
<accession>P08766</accession>
<dbReference type="EMBL" id="X00774">
    <property type="protein sequence ID" value="CAA25349.1"/>
    <property type="molecule type" value="Genomic_DNA"/>
</dbReference>
<dbReference type="EMBL" id="X60322">
    <property type="protein sequence ID" value="CAA42880.1"/>
    <property type="molecule type" value="Genomic_DNA"/>
</dbReference>
<dbReference type="PIR" id="S22333">
    <property type="entry name" value="S22333"/>
</dbReference>
<dbReference type="RefSeq" id="NP_039596.1">
    <property type="nucleotide sequence ID" value="NC_001330.1"/>
</dbReference>
<dbReference type="PDB" id="1M06">
    <property type="method" value="X-ray"/>
    <property type="resolution" value="3.50 A"/>
    <property type="chains" value="J=1-24"/>
</dbReference>
<dbReference type="PDBsum" id="1M06"/>
<dbReference type="SMR" id="P69548"/>
<dbReference type="GeneID" id="1260696"/>
<dbReference type="KEGG" id="vg:1260696"/>
<dbReference type="Proteomes" id="UP000002137">
    <property type="component" value="Genome"/>
</dbReference>
<dbReference type="GO" id="GO:0030430">
    <property type="term" value="C:host cell cytoplasm"/>
    <property type="evidence" value="ECO:0007669"/>
    <property type="project" value="UniProtKB-SubCell"/>
</dbReference>
<dbReference type="GO" id="GO:0019028">
    <property type="term" value="C:viral capsid"/>
    <property type="evidence" value="ECO:0007669"/>
    <property type="project" value="UniProtKB-KW"/>
</dbReference>
<dbReference type="GO" id="GO:0003677">
    <property type="term" value="F:DNA binding"/>
    <property type="evidence" value="ECO:0007669"/>
    <property type="project" value="UniProtKB-KW"/>
</dbReference>
<dbReference type="InterPro" id="IPR006815">
    <property type="entry name" value="Microvir_J-like"/>
</dbReference>
<dbReference type="Pfam" id="PF04726">
    <property type="entry name" value="Microvir_J"/>
    <property type="match status" value="1"/>
</dbReference>
<dbReference type="PIRSF" id="PIRSF004161">
    <property type="entry name" value="Microvir_J"/>
    <property type="match status" value="1"/>
</dbReference>
<organismHost>
    <name type="scientific">Escherichia coli</name>
    <dbReference type="NCBI Taxonomy" id="562"/>
</organismHost>
<evidence type="ECO:0000250" key="1">
    <source>
        <dbReference type="UniProtKB" id="P69592"/>
    </source>
</evidence>
<evidence type="ECO:0000305" key="2"/>
<evidence type="ECO:0007829" key="3">
    <source>
        <dbReference type="PDB" id="1M06"/>
    </source>
</evidence>
<gene>
    <name type="primary">J</name>
</gene>
<comment type="function">
    <text evidence="1">Mediates ssDNA packaging into virion, it locates to the internal surface of the capsid, thereby displacing the internal scaffolding protein B during virion formation. Protein J binds to and is packaged with the viral ssDNA. Additionally, protein J plays a role in viral attachment efficiency to the host cell.</text>
</comment>
<comment type="subunit">
    <text evidence="1">Interacts with F protein.</text>
</comment>
<comment type="subcellular location">
    <subcellularLocation>
        <location evidence="1">Virion</location>
    </subcellularLocation>
    <subcellularLocation>
        <location evidence="1">Host cytoplasm</location>
    </subcellularLocation>
    <text evidence="1">situated at the interface between the internal surface of the capsid and the nucleic acid.</text>
</comment>
<comment type="similarity">
    <text evidence="2">Belongs to the microviridae J protein family.</text>
</comment>
<reference key="1">
    <citation type="journal article" date="1984" name="Mol. Gen. Genet.">
        <title>Isolation and some properties of bacteriophage alpha3 gene J mutant.</title>
        <authorList>
            <person name="Kodaira K."/>
            <person name="Taketo A."/>
        </authorList>
    </citation>
    <scope>NUCLEOTIDE SEQUENCE [GENOMIC DNA]</scope>
</reference>
<reference key="2">
    <citation type="journal article" date="1992" name="Biochim. Biophys. Acta">
        <title>Nucleotide sequence of the genome of the bacteriophage alpha 3: interrelationship of the genome structure and the gene products with those of the phages, phi X174, G4 and phi K.</title>
        <authorList>
            <person name="Kodaira K."/>
            <person name="Nakano K."/>
            <person name="Okada S."/>
            <person name="Taketo A."/>
        </authorList>
    </citation>
    <scope>NUCLEOTIDE SEQUENCE [GENOMIC DNA]</scope>
</reference>
<feature type="chain" id="PRO_0000164904" description="DNA-binding protein J">
    <location>
        <begin position="1"/>
        <end position="24"/>
    </location>
</feature>
<feature type="helix" evidence="3">
    <location>
        <begin position="3"/>
        <end position="5"/>
    </location>
</feature>
<feature type="strand" evidence="3">
    <location>
        <begin position="12"/>
        <end position="14"/>
    </location>
</feature>
<feature type="strand" evidence="3">
    <location>
        <begin position="19"/>
        <end position="21"/>
    </location>
</feature>